<reference key="1">
    <citation type="journal article" date="1995" name="Eur. J. Biochem.">
        <title>Molecular cloning of CTP:phosphocholine cytidylyltransferase from Plasmodium falciparum.</title>
        <authorList>
            <person name="Yeo H.-J."/>
            <person name="Sri Widada J."/>
            <person name="Mercereau-Puijalon O."/>
            <person name="Vial H.J."/>
        </authorList>
    </citation>
    <scope>NUCLEOTIDE SEQUENCE [GENOMIC DNA]</scope>
</reference>
<organism>
    <name type="scientific">Plasmodium falciparum (isolate K1 / Thailand)</name>
    <dbReference type="NCBI Taxonomy" id="5839"/>
    <lineage>
        <taxon>Eukaryota</taxon>
        <taxon>Sar</taxon>
        <taxon>Alveolata</taxon>
        <taxon>Apicomplexa</taxon>
        <taxon>Aconoidasida</taxon>
        <taxon>Haemosporida</taxon>
        <taxon>Plasmodiidae</taxon>
        <taxon>Plasmodium</taxon>
        <taxon>Plasmodium (Laverania)</taxon>
    </lineage>
</organism>
<keyword id="KW-0002">3D-structure</keyword>
<keyword id="KW-0444">Lipid biosynthesis</keyword>
<keyword id="KW-0443">Lipid metabolism</keyword>
<keyword id="KW-0548">Nucleotidyltransferase</keyword>
<keyword id="KW-0594">Phospholipid biosynthesis</keyword>
<keyword id="KW-1208">Phospholipid metabolism</keyword>
<keyword id="KW-0808">Transferase</keyword>
<proteinExistence type="evidence at protein level"/>
<gene>
    <name type="primary">CTP</name>
</gene>
<comment type="function">
    <text>Controls phosphatidylcholine synthesis.</text>
</comment>
<comment type="catalytic activity">
    <reaction>
        <text>phosphocholine + CTP + H(+) = CDP-choline + diphosphate</text>
        <dbReference type="Rhea" id="RHEA:18997"/>
        <dbReference type="ChEBI" id="CHEBI:15378"/>
        <dbReference type="ChEBI" id="CHEBI:33019"/>
        <dbReference type="ChEBI" id="CHEBI:37563"/>
        <dbReference type="ChEBI" id="CHEBI:58779"/>
        <dbReference type="ChEBI" id="CHEBI:295975"/>
        <dbReference type="EC" id="2.7.7.15"/>
    </reaction>
</comment>
<comment type="pathway">
    <text>Phospholipid metabolism; phosphatidylcholine biosynthesis; phosphatidylcholine from phosphocholine: step 1/2.</text>
</comment>
<comment type="developmental stage">
    <text>Expressed in the asexual intraerythrocytic stages.</text>
</comment>
<comment type="similarity">
    <text evidence="3">Belongs to the cytidylyltransferase family.</text>
</comment>
<feature type="chain" id="PRO_0000208459" description="Choline-phosphate cytidylyltransferase">
    <location>
        <begin position="1"/>
        <end position="370"/>
    </location>
</feature>
<feature type="region of interest" description="Disordered" evidence="2">
    <location>
        <begin position="17"/>
        <end position="85"/>
    </location>
</feature>
<feature type="compositionally biased region" description="Basic and acidic residues" evidence="2">
    <location>
        <begin position="30"/>
        <end position="40"/>
    </location>
</feature>
<feature type="compositionally biased region" description="Acidic residues" evidence="2">
    <location>
        <begin position="44"/>
        <end position="72"/>
    </location>
</feature>
<feature type="binding site" evidence="1">
    <location>
        <begin position="99"/>
        <end position="107"/>
    </location>
    <ligand>
        <name>CTP</name>
        <dbReference type="ChEBI" id="CHEBI:37563"/>
    </ligand>
</feature>
<feature type="binding site" evidence="1">
    <location>
        <position position="137"/>
    </location>
    <ligand>
        <name>CTP</name>
        <dbReference type="ChEBI" id="CHEBI:37563"/>
    </ligand>
</feature>
<feature type="binding site" evidence="1">
    <location>
        <position position="137"/>
    </location>
    <ligand>
        <name>substrate</name>
    </ligand>
</feature>
<feature type="binding site" evidence="1">
    <location>
        <position position="166"/>
    </location>
    <ligand>
        <name>substrate</name>
    </ligand>
</feature>
<feature type="binding site" evidence="1">
    <location>
        <begin position="183"/>
        <end position="184"/>
    </location>
    <ligand>
        <name>CTP</name>
        <dbReference type="ChEBI" id="CHEBI:37563"/>
    </ligand>
</feature>
<feature type="binding site" evidence="1">
    <location>
        <position position="188"/>
    </location>
    <ligand>
        <name>CTP</name>
        <dbReference type="ChEBI" id="CHEBI:37563"/>
    </ligand>
</feature>
<feature type="binding site" evidence="1">
    <location>
        <begin position="229"/>
        <end position="233"/>
    </location>
    <ligand>
        <name>CTP</name>
        <dbReference type="ChEBI" id="CHEBI:37563"/>
    </ligand>
</feature>
<dbReference type="EC" id="2.7.7.15"/>
<dbReference type="EMBL" id="X84041">
    <property type="protein sequence ID" value="CAA58860.1"/>
    <property type="molecule type" value="Genomic_DNA"/>
</dbReference>
<dbReference type="PIR" id="S68187">
    <property type="entry name" value="S68187"/>
</dbReference>
<dbReference type="PDB" id="9HSB">
    <property type="method" value="X-ray"/>
    <property type="resolution" value="1.81 A"/>
    <property type="chains" value="A=54-249"/>
</dbReference>
<dbReference type="PDB" id="9HSC">
    <property type="method" value="X-ray"/>
    <property type="resolution" value="2.18 A"/>
    <property type="chains" value="A=54-249"/>
</dbReference>
<dbReference type="PDB" id="9HSD">
    <property type="method" value="X-ray"/>
    <property type="resolution" value="2.18 A"/>
    <property type="chains" value="A=54-249"/>
</dbReference>
<dbReference type="PDB" id="9HSE">
    <property type="method" value="X-ray"/>
    <property type="resolution" value="1.96 A"/>
    <property type="chains" value="A=54-249"/>
</dbReference>
<dbReference type="PDB" id="9HSF">
    <property type="method" value="X-ray"/>
    <property type="resolution" value="2.10 A"/>
    <property type="chains" value="A=54-249"/>
</dbReference>
<dbReference type="PDB" id="9HSG">
    <property type="method" value="X-ray"/>
    <property type="resolution" value="2.36 A"/>
    <property type="chains" value="A=54-248"/>
</dbReference>
<dbReference type="PDB" id="9HSH">
    <property type="method" value="X-ray"/>
    <property type="resolution" value="1.80 A"/>
    <property type="chains" value="A=54-248"/>
</dbReference>
<dbReference type="PDB" id="9HSI">
    <property type="method" value="X-ray"/>
    <property type="resolution" value="1.97 A"/>
    <property type="chains" value="A=54-248"/>
</dbReference>
<dbReference type="PDB" id="9HSJ">
    <property type="method" value="X-ray"/>
    <property type="resolution" value="1.76 A"/>
    <property type="chains" value="A=54-248"/>
</dbReference>
<dbReference type="PDB" id="9HSK">
    <property type="method" value="X-ray"/>
    <property type="resolution" value="2.15 A"/>
    <property type="chains" value="A=54-248"/>
</dbReference>
<dbReference type="PDB" id="9HSL">
    <property type="method" value="X-ray"/>
    <property type="resolution" value="2.15 A"/>
    <property type="chains" value="A=54-248"/>
</dbReference>
<dbReference type="PDB" id="9HSM">
    <property type="method" value="X-ray"/>
    <property type="resolution" value="2.05 A"/>
    <property type="chains" value="A=54-248"/>
</dbReference>
<dbReference type="PDB" id="9HSN">
    <property type="method" value="X-ray"/>
    <property type="resolution" value="2.09 A"/>
    <property type="chains" value="A=54-248"/>
</dbReference>
<dbReference type="PDB" id="9HSO">
    <property type="method" value="X-ray"/>
    <property type="resolution" value="2.30 A"/>
    <property type="chains" value="A=54-248"/>
</dbReference>
<dbReference type="PDB" id="9HSP">
    <property type="method" value="X-ray"/>
    <property type="resolution" value="2.09 A"/>
    <property type="chains" value="A=54-248"/>
</dbReference>
<dbReference type="PDB" id="9HSQ">
    <property type="method" value="X-ray"/>
    <property type="resolution" value="1.77 A"/>
    <property type="chains" value="A=54-248"/>
</dbReference>
<dbReference type="PDB" id="9HSR">
    <property type="method" value="X-ray"/>
    <property type="resolution" value="2.42 A"/>
    <property type="chains" value="A=54-248"/>
</dbReference>
<dbReference type="PDB" id="9HST">
    <property type="method" value="X-ray"/>
    <property type="resolution" value="2.39 A"/>
    <property type="chains" value="A=54-248"/>
</dbReference>
<dbReference type="PDB" id="9HSV">
    <property type="method" value="X-ray"/>
    <property type="resolution" value="1.68 A"/>
    <property type="chains" value="A=54-248"/>
</dbReference>
<dbReference type="PDB" id="9HSW">
    <property type="method" value="X-ray"/>
    <property type="resolution" value="1.76 A"/>
    <property type="chains" value="A=54-248"/>
</dbReference>
<dbReference type="PDB" id="9HSX">
    <property type="method" value="X-ray"/>
    <property type="resolution" value="2.23 A"/>
    <property type="chains" value="A=54-248"/>
</dbReference>
<dbReference type="PDB" id="9HSZ">
    <property type="method" value="X-ray"/>
    <property type="resolution" value="1.96 A"/>
    <property type="chains" value="A=54-248"/>
</dbReference>
<dbReference type="PDBsum" id="9HSB"/>
<dbReference type="PDBsum" id="9HSC"/>
<dbReference type="PDBsum" id="9HSD"/>
<dbReference type="PDBsum" id="9HSE"/>
<dbReference type="PDBsum" id="9HSF"/>
<dbReference type="PDBsum" id="9HSG"/>
<dbReference type="PDBsum" id="9HSH"/>
<dbReference type="PDBsum" id="9HSI"/>
<dbReference type="PDBsum" id="9HSJ"/>
<dbReference type="PDBsum" id="9HSK"/>
<dbReference type="PDBsum" id="9HSL"/>
<dbReference type="PDBsum" id="9HSM"/>
<dbReference type="PDBsum" id="9HSN"/>
<dbReference type="PDBsum" id="9HSO"/>
<dbReference type="PDBsum" id="9HSP"/>
<dbReference type="PDBsum" id="9HSQ"/>
<dbReference type="PDBsum" id="9HSR"/>
<dbReference type="PDBsum" id="9HST"/>
<dbReference type="PDBsum" id="9HSV"/>
<dbReference type="PDBsum" id="9HSW"/>
<dbReference type="PDBsum" id="9HSX"/>
<dbReference type="PDBsum" id="9HSZ"/>
<dbReference type="SMR" id="P49587"/>
<dbReference type="BRENDA" id="2.7.7.15">
    <property type="organism ID" value="4889"/>
</dbReference>
<dbReference type="UniPathway" id="UPA00753">
    <property type="reaction ID" value="UER00739"/>
</dbReference>
<dbReference type="GO" id="GO:0004105">
    <property type="term" value="F:choline-phosphate cytidylyltransferase activity"/>
    <property type="evidence" value="ECO:0007669"/>
    <property type="project" value="UniProtKB-EC"/>
</dbReference>
<dbReference type="GO" id="GO:0031210">
    <property type="term" value="F:phosphatidylcholine binding"/>
    <property type="evidence" value="ECO:0007669"/>
    <property type="project" value="TreeGrafter"/>
</dbReference>
<dbReference type="CDD" id="cd02174">
    <property type="entry name" value="CCT"/>
    <property type="match status" value="1"/>
</dbReference>
<dbReference type="FunFam" id="3.40.50.620:FF:000214">
    <property type="entry name" value="Choline-phosphate cytidylyltransferase"/>
    <property type="match status" value="1"/>
</dbReference>
<dbReference type="Gene3D" id="3.40.50.620">
    <property type="entry name" value="HUPs"/>
    <property type="match status" value="1"/>
</dbReference>
<dbReference type="InterPro" id="IPR041723">
    <property type="entry name" value="CCT"/>
</dbReference>
<dbReference type="InterPro" id="IPR004821">
    <property type="entry name" value="Cyt_trans-like"/>
</dbReference>
<dbReference type="InterPro" id="IPR045049">
    <property type="entry name" value="Pcy1-like"/>
</dbReference>
<dbReference type="InterPro" id="IPR014729">
    <property type="entry name" value="Rossmann-like_a/b/a_fold"/>
</dbReference>
<dbReference type="NCBIfam" id="TIGR00125">
    <property type="entry name" value="cyt_tran_rel"/>
    <property type="match status" value="1"/>
</dbReference>
<dbReference type="PANTHER" id="PTHR10739:SF13">
    <property type="entry name" value="CHOLINE-PHOSPHATE CYTIDYLYLTRANSFERASE"/>
    <property type="match status" value="1"/>
</dbReference>
<dbReference type="PANTHER" id="PTHR10739">
    <property type="entry name" value="CYTIDYLYLTRANSFERASE"/>
    <property type="match status" value="1"/>
</dbReference>
<dbReference type="Pfam" id="PF01467">
    <property type="entry name" value="CTP_transf_like"/>
    <property type="match status" value="1"/>
</dbReference>
<dbReference type="SUPFAM" id="SSF52374">
    <property type="entry name" value="Nucleotidylyl transferase"/>
    <property type="match status" value="1"/>
</dbReference>
<evidence type="ECO:0000250" key="1"/>
<evidence type="ECO:0000256" key="2">
    <source>
        <dbReference type="SAM" id="MobiDB-lite"/>
    </source>
</evidence>
<evidence type="ECO:0000305" key="3"/>
<accession>P49587</accession>
<name>PCY1_PLAFK</name>
<sequence>MDSSNYFHDCKTMLSEHNESIESSNNDINGKQKEHIKKGNSENQDVDPDTNPDAVPDDDDDDDDNSNDESEYESSQMDSEKNKGSIKNSKNVVIYADGVYDMLHLGHMKQLEQAKKLFENTTLIVGVTSDNETKLFKGQVVQTLEERTETLKHIRWVDEIISPCPWVVTPEFLEKYKIDYVAHDDIPYANNQKKKKKKKSKGKSFSFDEENEDIYAWLKRAGKFKATQRTEGVSTTDLIVRILKNYEDYIERSLQRGIHPNELNIGVTKAQSIKMKKNLIRWGEKVTDELTKVTLTDKPLGTDFDQGVENLQVKFKELFKIWKNASNKLITDFTRKLEATSYLTSIQNIIDYEIENDDYASSNFDDETSS</sequence>
<protein>
    <recommendedName>
        <fullName>Choline-phosphate cytidylyltransferase</fullName>
        <ecNumber>2.7.7.15</ecNumber>
    </recommendedName>
    <alternativeName>
        <fullName>CTP:phosphocholine cytidylyltransferase</fullName>
        <shortName>CCT</shortName>
        <shortName>CT</shortName>
    </alternativeName>
    <alternativeName>
        <fullName>Phosphorylcholine transferase</fullName>
    </alternativeName>
</protein>